<sequence>MQGLRTLFLLLTACLASRADPASTLPDIQVQENFSESRIYGKWYNLAVGSTCPWLSRIKDKMSVSTLVLQEGATETEISMTSTRWRRGVCEEITGAYQKTDIDGKFLYHKSKWNITLESYVVHTNYDEYAIFLTKKSSHHHGLTITAKLYGREPQLRDSLLQEFKDVALNVGISENSIIFMPDRGECVPGDREVEPTSIARARRAVLPQESEGSGTEPLITGTLKKEDSCQLNYSEGPCLGMQERYYYNGASMACETFQYGGCLGNGNNFISEKDCLQTCRTIAACNLPIVQGPCRAFIKLWAFDAAQGKCIQFHYGGCKGNGNKFYSEKECKEYCGVPGDGYEELIRS</sequence>
<gene>
    <name type="primary">Ambp</name>
    <name type="synonym">Itil</name>
</gene>
<dbReference type="EC" id="1.6.2.-" evidence="2"/>
<dbReference type="EMBL" id="X68680">
    <property type="protein sequence ID" value="CAA48640.1"/>
    <property type="molecule type" value="mRNA"/>
</dbReference>
<dbReference type="EMBL" id="D28812">
    <property type="protein sequence ID" value="BAA05973.1"/>
    <property type="molecule type" value="mRNA"/>
</dbReference>
<dbReference type="EMBL" id="AF034692">
    <property type="protein sequence ID" value="AAD01995.1"/>
    <property type="molecule type" value="Genomic_DNA"/>
</dbReference>
<dbReference type="EMBL" id="AK004907">
    <property type="protein sequence ID" value="BAB23659.1"/>
    <property type="molecule type" value="mRNA"/>
</dbReference>
<dbReference type="EMBL" id="BC021660">
    <property type="protein sequence ID" value="AAH21660.1"/>
    <property type="molecule type" value="mRNA"/>
</dbReference>
<dbReference type="CCDS" id="CCDS18248.1"/>
<dbReference type="PIR" id="S35708">
    <property type="entry name" value="S35708"/>
</dbReference>
<dbReference type="RefSeq" id="NP_031469.1">
    <property type="nucleotide sequence ID" value="NM_007443.5"/>
</dbReference>
<dbReference type="SMR" id="Q07456"/>
<dbReference type="BioGRID" id="198084">
    <property type="interactions" value="7"/>
</dbReference>
<dbReference type="FunCoup" id="Q07456">
    <property type="interactions" value="152"/>
</dbReference>
<dbReference type="IntAct" id="Q07456">
    <property type="interactions" value="1"/>
</dbReference>
<dbReference type="MINT" id="Q07456"/>
<dbReference type="STRING" id="10090.ENSMUSP00000030041"/>
<dbReference type="MEROPS" id="I02.006"/>
<dbReference type="GlyConnect" id="739">
    <property type="glycosylation" value="1 N-Linked glycan (1 site)"/>
</dbReference>
<dbReference type="GlyCosmos" id="Q07456">
    <property type="glycosylation" value="3 sites, 2 glycans"/>
</dbReference>
<dbReference type="GlyGen" id="Q07456">
    <property type="glycosylation" value="5 sites, 2 N-linked glycans (1 site), 1 O-linked glycan (1 site)"/>
</dbReference>
<dbReference type="iPTMnet" id="Q07456"/>
<dbReference type="PhosphoSitePlus" id="Q07456"/>
<dbReference type="SwissPalm" id="Q07456"/>
<dbReference type="CPTAC" id="non-CPTAC-3510"/>
<dbReference type="CPTAC" id="non-CPTAC-5576"/>
<dbReference type="jPOST" id="Q07456"/>
<dbReference type="PaxDb" id="10090-ENSMUSP00000030041"/>
<dbReference type="PeptideAtlas" id="Q07456"/>
<dbReference type="ProteomicsDB" id="296228"/>
<dbReference type="Antibodypedia" id="876">
    <property type="antibodies" value="565 antibodies from 36 providers"/>
</dbReference>
<dbReference type="DNASU" id="11699"/>
<dbReference type="Ensembl" id="ENSMUST00000030041.5">
    <property type="protein sequence ID" value="ENSMUSP00000030041.5"/>
    <property type="gene ID" value="ENSMUSG00000028356.5"/>
</dbReference>
<dbReference type="GeneID" id="11699"/>
<dbReference type="KEGG" id="mmu:11699"/>
<dbReference type="UCSC" id="uc008tfp.1">
    <property type="organism name" value="mouse"/>
</dbReference>
<dbReference type="AGR" id="MGI:88002"/>
<dbReference type="CTD" id="259"/>
<dbReference type="MGI" id="MGI:88002">
    <property type="gene designation" value="Ambp"/>
</dbReference>
<dbReference type="VEuPathDB" id="HostDB:ENSMUSG00000028356"/>
<dbReference type="eggNOG" id="KOG4295">
    <property type="taxonomic scope" value="Eukaryota"/>
</dbReference>
<dbReference type="GeneTree" id="ENSGT00940000160109"/>
<dbReference type="HOGENOM" id="CLU_067584_0_0_1"/>
<dbReference type="InParanoid" id="Q07456"/>
<dbReference type="OMA" id="CPWLKRI"/>
<dbReference type="OrthoDB" id="9949223at2759"/>
<dbReference type="PhylomeDB" id="Q07456"/>
<dbReference type="TreeFam" id="TF351222"/>
<dbReference type="Reactome" id="R-MMU-2168880">
    <property type="pathway name" value="Scavenging of heme from plasma"/>
</dbReference>
<dbReference type="BioGRID-ORCS" id="11699">
    <property type="hits" value="0 hits in 75 CRISPR screens"/>
</dbReference>
<dbReference type="PRO" id="PR:Q07456"/>
<dbReference type="Proteomes" id="UP000000589">
    <property type="component" value="Chromosome 4"/>
</dbReference>
<dbReference type="RNAct" id="Q07456">
    <property type="molecule type" value="protein"/>
</dbReference>
<dbReference type="Bgee" id="ENSMUSG00000028356">
    <property type="expression patterns" value="Expressed in left lobe of liver and 78 other cell types or tissues"/>
</dbReference>
<dbReference type="ExpressionAtlas" id="Q07456">
    <property type="expression patterns" value="baseline and differential"/>
</dbReference>
<dbReference type="GO" id="GO:0009986">
    <property type="term" value="C:cell surface"/>
    <property type="evidence" value="ECO:0007669"/>
    <property type="project" value="Ensembl"/>
</dbReference>
<dbReference type="GO" id="GO:0062023">
    <property type="term" value="C:collagen-containing extracellular matrix"/>
    <property type="evidence" value="ECO:0007005"/>
    <property type="project" value="BHF-UCL"/>
</dbReference>
<dbReference type="GO" id="GO:0005829">
    <property type="term" value="C:cytosol"/>
    <property type="evidence" value="ECO:0007669"/>
    <property type="project" value="UniProtKB-SubCell"/>
</dbReference>
<dbReference type="GO" id="GO:0005783">
    <property type="term" value="C:endoplasmic reticulum"/>
    <property type="evidence" value="ECO:0007669"/>
    <property type="project" value="UniProtKB-SubCell"/>
</dbReference>
<dbReference type="GO" id="GO:0005615">
    <property type="term" value="C:extracellular space"/>
    <property type="evidence" value="ECO:0007669"/>
    <property type="project" value="Ensembl"/>
</dbReference>
<dbReference type="GO" id="GO:0005743">
    <property type="term" value="C:mitochondrial inner membrane"/>
    <property type="evidence" value="ECO:0007669"/>
    <property type="project" value="UniProtKB-SubCell"/>
</dbReference>
<dbReference type="GO" id="GO:0031965">
    <property type="term" value="C:nuclear membrane"/>
    <property type="evidence" value="ECO:0007669"/>
    <property type="project" value="UniProtKB-SubCell"/>
</dbReference>
<dbReference type="GO" id="GO:0005886">
    <property type="term" value="C:plasma membrane"/>
    <property type="evidence" value="ECO:0000250"/>
    <property type="project" value="UniProtKB"/>
</dbReference>
<dbReference type="GO" id="GO:0020037">
    <property type="term" value="F:heme binding"/>
    <property type="evidence" value="ECO:0000250"/>
    <property type="project" value="UniProtKB"/>
</dbReference>
<dbReference type="GO" id="GO:0019862">
    <property type="term" value="F:IgA binding"/>
    <property type="evidence" value="ECO:0000250"/>
    <property type="project" value="UniProtKB"/>
</dbReference>
<dbReference type="GO" id="GO:0016491">
    <property type="term" value="F:oxidoreductase activity"/>
    <property type="evidence" value="ECO:0007669"/>
    <property type="project" value="UniProtKB-KW"/>
</dbReference>
<dbReference type="GO" id="GO:0042803">
    <property type="term" value="F:protein homodimerization activity"/>
    <property type="evidence" value="ECO:0000250"/>
    <property type="project" value="UniProtKB"/>
</dbReference>
<dbReference type="GO" id="GO:0004867">
    <property type="term" value="F:serine-type endopeptidase inhibitor activity"/>
    <property type="evidence" value="ECO:0007669"/>
    <property type="project" value="UniProtKB-KW"/>
</dbReference>
<dbReference type="GO" id="GO:0030163">
    <property type="term" value="P:protein catabolic process"/>
    <property type="evidence" value="ECO:0007669"/>
    <property type="project" value="Ensembl"/>
</dbReference>
<dbReference type="GO" id="GO:0051604">
    <property type="term" value="P:protein maturation"/>
    <property type="evidence" value="ECO:0000266"/>
    <property type="project" value="MGI"/>
</dbReference>
<dbReference type="CDD" id="cd22596">
    <property type="entry name" value="Kunitz_bikunin_1-like"/>
    <property type="match status" value="1"/>
</dbReference>
<dbReference type="CDD" id="cd22597">
    <property type="entry name" value="Kunitz_bikunin_2-like"/>
    <property type="match status" value="1"/>
</dbReference>
<dbReference type="CDD" id="cd19418">
    <property type="entry name" value="lipocalin_A1M-like"/>
    <property type="match status" value="1"/>
</dbReference>
<dbReference type="FunFam" id="2.40.128.20:FF:000007">
    <property type="entry name" value="Alpha-1-microglobulin/bikunin precursor"/>
    <property type="match status" value="1"/>
</dbReference>
<dbReference type="FunFam" id="4.10.410.10:FF:000010">
    <property type="entry name" value="Alpha1-microglobulin/bikunin (AMBP)"/>
    <property type="match status" value="1"/>
</dbReference>
<dbReference type="Gene3D" id="2.40.128.20">
    <property type="match status" value="1"/>
</dbReference>
<dbReference type="Gene3D" id="4.10.410.10">
    <property type="entry name" value="Pancreatic trypsin inhibitor Kunitz domain"/>
    <property type="match status" value="2"/>
</dbReference>
<dbReference type="InterPro" id="IPR002968">
    <property type="entry name" value="A1-microglobln"/>
</dbReference>
<dbReference type="InterPro" id="IPR029856">
    <property type="entry name" value="AMBP"/>
</dbReference>
<dbReference type="InterPro" id="IPR012674">
    <property type="entry name" value="Calycin"/>
</dbReference>
<dbReference type="InterPro" id="IPR002223">
    <property type="entry name" value="Kunitz_BPTI"/>
</dbReference>
<dbReference type="InterPro" id="IPR036880">
    <property type="entry name" value="Kunitz_BPTI_sf"/>
</dbReference>
<dbReference type="InterPro" id="IPR022272">
    <property type="entry name" value="Lipocalin_CS"/>
</dbReference>
<dbReference type="InterPro" id="IPR000566">
    <property type="entry name" value="Lipocln_cytosolic_FA-bd_dom"/>
</dbReference>
<dbReference type="InterPro" id="IPR020901">
    <property type="entry name" value="Prtase_inh_Kunz-CS"/>
</dbReference>
<dbReference type="PANTHER" id="PTHR46676">
    <property type="entry name" value="PROTEIN AMBP"/>
    <property type="match status" value="1"/>
</dbReference>
<dbReference type="PANTHER" id="PTHR46676:SF1">
    <property type="entry name" value="PROTEIN AMBP"/>
    <property type="match status" value="1"/>
</dbReference>
<dbReference type="Pfam" id="PF00014">
    <property type="entry name" value="Kunitz_BPTI"/>
    <property type="match status" value="2"/>
</dbReference>
<dbReference type="Pfam" id="PF00061">
    <property type="entry name" value="Lipocalin"/>
    <property type="match status" value="1"/>
</dbReference>
<dbReference type="PRINTS" id="PR01215">
    <property type="entry name" value="A1MCGLOBULIN"/>
</dbReference>
<dbReference type="PRINTS" id="PR00759">
    <property type="entry name" value="BASICPTASE"/>
</dbReference>
<dbReference type="PRINTS" id="PR00179">
    <property type="entry name" value="LIPOCALIN"/>
</dbReference>
<dbReference type="SMART" id="SM00131">
    <property type="entry name" value="KU"/>
    <property type="match status" value="2"/>
</dbReference>
<dbReference type="SUPFAM" id="SSF57362">
    <property type="entry name" value="BPTI-like"/>
    <property type="match status" value="2"/>
</dbReference>
<dbReference type="SUPFAM" id="SSF50814">
    <property type="entry name" value="Lipocalins"/>
    <property type="match status" value="1"/>
</dbReference>
<dbReference type="PROSITE" id="PS00280">
    <property type="entry name" value="BPTI_KUNITZ_1"/>
    <property type="match status" value="2"/>
</dbReference>
<dbReference type="PROSITE" id="PS50279">
    <property type="entry name" value="BPTI_KUNITZ_2"/>
    <property type="match status" value="2"/>
</dbReference>
<dbReference type="PROSITE" id="PS00213">
    <property type="entry name" value="LIPOCALIN"/>
    <property type="match status" value="1"/>
</dbReference>
<organism>
    <name type="scientific">Mus musculus</name>
    <name type="common">Mouse</name>
    <dbReference type="NCBI Taxonomy" id="10090"/>
    <lineage>
        <taxon>Eukaryota</taxon>
        <taxon>Metazoa</taxon>
        <taxon>Chordata</taxon>
        <taxon>Craniata</taxon>
        <taxon>Vertebrata</taxon>
        <taxon>Euteleostomi</taxon>
        <taxon>Mammalia</taxon>
        <taxon>Eutheria</taxon>
        <taxon>Euarchontoglires</taxon>
        <taxon>Glires</taxon>
        <taxon>Rodentia</taxon>
        <taxon>Myomorpha</taxon>
        <taxon>Muroidea</taxon>
        <taxon>Muridae</taxon>
        <taxon>Murinae</taxon>
        <taxon>Mus</taxon>
        <taxon>Mus</taxon>
    </lineage>
</organism>
<comment type="function">
    <molecule>Alpha-1-microglobulin</molecule>
    <text evidence="2 8">Antioxidant and tissue repair protein with reductase, heme-binding and radical-scavenging activities. Removes and protects against harmful oxidants and repairs macromolecules in intravascular and extravascular spaces and in intracellular compartments. Intravascularly, plays a regulatory role in red cell homeostasis by preventing heme- and reactive oxygen species-induced cell damage. Binds and degrades free heme to protect fetal and adult red blood cells from hemolysis. Reduces extracellular methemoglobin, a Fe3+ (ferric) form of hemoglobin that cannot bind oxygen, back to the Fe2+ (ferrous) form deoxyhemoglobin, which has oxygen-carrying potential. Upon acute inflammation, inhibits oxidation of low-density lipoprotein particles by MPO and limits vascular damage. Extravascularly, protects from oxidation products formed on extracellular matrix structures and cell membranes. Catalyzes the reduction of carbonyl groups on oxidized collagen fibers and preserves cellular and extracellular matrix ultrastructures. Importantly, counteracts the oxidative damage at blood-placenta interface, preventing leakage of free fetal hemoglobin into the maternal circulation. Intracellularly, has a role in maintaining mitochondrial redox homeostasis. Bound to complex I of the respiratory chain of mitochondria, may scavenge free radicals and preserve mitochondrial ATP synthesis. Protects renal tubule epithelial cells from heme-induced oxidative damage to mitochondria. Reduces cytochrome c from Fe3+ (ferric) to the Fe2+ (ferrous) state through formation of superoxide anion radicals in the presence of ascorbate or NADH/NADPH electron donor cofactors, ascorbate being the preferred cofactor (By similarity). Has a chaperone role in facilitating the correct folding of bikunin in the endoplasmic reticulum compartment (PubMed:32092411).</text>
</comment>
<comment type="function">
    <molecule>Inter-alpha-trypsin inhibitor light chain</molecule>
    <text evidence="2 6 7">Kunitz-type serine protease inhibitor and structural component of extracellular matrix with a role in extracellular space remodeling and cell adhesion. Among others, has antiprotease activity toward kallikrein, a protease involved in airway inflammation; inhibits GZMK/granzyme, a granule-stored serine protease involved in NK and T cell cytotoxic responses; and inhibits PLG/plasmin, a protease required for activation of matrix metalloproteinases. As part of I-alpha-I complex, provides for the heavy chains to be transferred from I-alpha-I complex to hyaluronan in the presence of TNFAIP6, in a dynamic process that releases free bikunin and remodels extracellular matrix proteoglycan structures. Free bikunin, but not its heavy chain-bound form, acts as a potent protease inhibitor in airway secretions (By similarity). Part of hyaluronan-rich extracellular matrix that surrounds oocyte during cumulus oophorus expansion, an indispensable process for proper ovulation (PubMed:11145954, PubMed:11243855). Also inhibits calcium oxalate crystallization (By similarity).</text>
</comment>
<comment type="function">
    <molecule>Trypstatin</molecule>
    <text evidence="3">Kunitz-type serine protease inhibitor. Has high catalytic efficiency for F10/blood coagulation factor Xa and may act as an anticoagulant by inhibiting prothrombin activation. Inhibits trypsin and mast cell CMA1/chymase and tryptase proteases.</text>
</comment>
<comment type="subunit">
    <molecule>Alpha-1-microglobulin</molecule>
    <text evidence="2 3">Monomer. Homodimer. In plasma, it occurs as a monomer or dimer and in covalently-linked complexes with immunoglobulin A (IgA), ALB/albumin and F2/prothrombin. Chromophore-bound alpha-1-microglobulin interacts with the constant region of immunoglobulin A. Chromophore-bound alpha-1-microglobulin interacts with ALB with molar ratio 2:1 and 1:1; this interaction does not prevent fatty acid binding to ALB. Interacts with F2/prothrombin (via N-terminus) with molar ratio 2:1 and 1:1; this interaction does not prevent the activation of prothrombin to thrombin. Interacts with NDUFAB1, a subunit of mitochondrial complex I (By similarity). Interacts with FN1 (By similarity).</text>
</comment>
<comment type="subunit">
    <molecule>Inter-alpha-trypsin inhibitor light chain</molecule>
    <text evidence="2">I-alpha-I plasma protease inhibitors are assembled from one or two heavy chains (HC) and one light chain, bikunin. Inter-alpha-inhibitor (I-alpha-I) is composed of ITIH1/HC1, ITIH2/HC2 and bikunin, and pre-alpha-inhibitor (P-alpha-I) of ITIH3/HC3 and bikunin. Interacts with TNFAIP6 (via Link domain).</text>
</comment>
<comment type="subunit">
    <molecule>Trypstatin</molecule>
    <text evidence="3">Monomer. Also occurs as a complex with tryptase in mast cells.</text>
</comment>
<comment type="subcellular location">
    <molecule>Alpha-1-microglobulin</molecule>
    <subcellularLocation>
        <location evidence="2">Secreted</location>
    </subcellularLocation>
    <subcellularLocation>
        <location evidence="2">Endoplasmic reticulum</location>
    </subcellularLocation>
    <subcellularLocation>
        <location evidence="2">Cytoplasm</location>
        <location evidence="2">Cytosol</location>
    </subcellularLocation>
    <subcellularLocation>
        <location evidence="2">Cell membrane</location>
        <topology evidence="2">Peripheral membrane protein</topology>
    </subcellularLocation>
    <subcellularLocation>
        <location evidence="2">Nucleus membrane</location>
        <topology evidence="2">Peripheral membrane protein</topology>
    </subcellularLocation>
    <subcellularLocation>
        <location evidence="2">Mitochondrion inner membrane</location>
        <topology evidence="2">Peripheral membrane protein</topology>
    </subcellularLocation>
    <subcellularLocation>
        <location evidence="2">Secreted</location>
        <location evidence="2">Extracellular space</location>
        <location evidence="2">Extracellular matrix</location>
    </subcellularLocation>
    <text evidence="2">The cellular uptake occurs via a non-endocytotic pathway and allows for localization to various membrane structures. A specific binding to plasma membrane suggests the presence of a cell receptor, yet to be identified. Directly binds collagen fibers type I.</text>
</comment>
<comment type="subcellular location">
    <molecule>Inter-alpha-trypsin inhibitor light chain</molecule>
    <subcellularLocation>
        <location evidence="2">Secreted</location>
    </subcellularLocation>
</comment>
<comment type="tissue specificity">
    <text evidence="8">Expressed by the liver and secreted in plasma (at protein level).</text>
</comment>
<comment type="domain">
    <molecule>Inter-alpha-trypsin inhibitor light chain</molecule>
    <text evidence="2">The Kunitz domains 1 and 2 serve as protease inhibitor domains.</text>
</comment>
<comment type="PTM">
    <text evidence="2">The precursor is proteolytically processed into separately functioning proteins.</text>
</comment>
<comment type="PTM">
    <molecule>Alpha-1-microglobulin</molecule>
    <text evidence="2">3-hydroxykynurenine, an oxidized tryptophan metabolite that is common in biological fluids, reacts with Cys-53, Lys-111, Lys-137, and Lys-149 to form heterogeneous polycyclic chromophores including hydroxanthommatin. The reaction by alpha-1-microglobulin is autocatalytic; the human protein forms chromophore even when expressed in insect and bacterial cells. The chromophore can react with accessible cysteines forming non-reducible thioether cross-links with other molecules of alpha-1-microglobulin or with other proteins such as Ig alpha-1 chain C region 'Cys-352'.</text>
</comment>
<comment type="PTM">
    <molecule>Inter-alpha-trypsin inhibitor light chain</molecule>
    <text evidence="2">Heavy chains are interlinked with bikunin via a chondroitin 4-sulfate bridge to the C-terminal aspartate.</text>
</comment>
<comment type="PTM">
    <molecule>Inter-alpha-trypsin inhibitor light chain</molecule>
    <text evidence="2">Proteolytically cleaved by PRSS3 at Kunitz domain 2.</text>
</comment>
<comment type="disruption phenotype">
    <molecule>Alpha-1-microglobulin</molecule>
    <text evidence="8 9">Mutant mice has normal litter size. At 12 months of age they show significant increase in body weight, which is partly due to fat accumulation in the liver with a subsequent increase in liver mass (PubMed:32092411). They display an abnormal red blood cell morphology, similar to macrocytic anemia characterized by fewer, larger and heterogeneous red cells (PubMed:32092412).</text>
</comment>
<comment type="disruption phenotype">
    <molecule>Inter-alpha-trypsin inhibitor light chain</molecule>
    <text evidence="6 7">Mice are born at the expected Mendelian rate. Mutant female mice show severe infertility due to impaired cumulus oophorus expansion upon gonadotropin surge.</text>
</comment>
<comment type="similarity">
    <text evidence="10">In the N-terminal section; belongs to the calycin superfamily. Lipocalin family.</text>
</comment>
<name>AMBP_MOUSE</name>
<protein>
    <recommendedName>
        <fullName>Protein AMBP</fullName>
    </recommendedName>
    <component>
        <recommendedName>
            <fullName>Alpha-1-microglobulin</fullName>
            <ecNumber evidence="2">1.6.2.-</ecNumber>
        </recommendedName>
    </component>
    <component>
        <recommendedName>
            <fullName>Inter-alpha-trypsin inhibitor light chain</fullName>
            <shortName>ITI-LC</shortName>
        </recommendedName>
        <alternativeName>
            <fullName>Bikunin</fullName>
        </alternativeName>
        <alternativeName>
            <fullName>HI-30</fullName>
        </alternativeName>
    </component>
    <component>
        <recommendedName>
            <fullName>Trypstatin</fullName>
        </recommendedName>
    </component>
</protein>
<evidence type="ECO:0000250" key="1"/>
<evidence type="ECO:0000250" key="2">
    <source>
        <dbReference type="UniProtKB" id="P02760"/>
    </source>
</evidence>
<evidence type="ECO:0000250" key="3">
    <source>
        <dbReference type="UniProtKB" id="Q64240"/>
    </source>
</evidence>
<evidence type="ECO:0000255" key="4"/>
<evidence type="ECO:0000255" key="5">
    <source>
        <dbReference type="PROSITE-ProRule" id="PRU00031"/>
    </source>
</evidence>
<evidence type="ECO:0000269" key="6">
    <source>
    </source>
</evidence>
<evidence type="ECO:0000269" key="7">
    <source>
    </source>
</evidence>
<evidence type="ECO:0000269" key="8">
    <source>
    </source>
</evidence>
<evidence type="ECO:0000269" key="9">
    <source>
    </source>
</evidence>
<evidence type="ECO:0000305" key="10"/>
<feature type="signal peptide" evidence="1">
    <location>
        <begin position="1"/>
        <end position="19"/>
    </location>
</feature>
<feature type="chain" id="PRO_0000017893" description="Alpha-1-microglobulin">
    <location>
        <begin position="20"/>
        <end position="202"/>
    </location>
</feature>
<feature type="chain" id="PRO_0000017894" description="Inter-alpha-trypsin inhibitor light chain">
    <location>
        <begin position="205"/>
        <end position="349"/>
    </location>
</feature>
<feature type="chain" id="PRO_0000318928" description="Trypstatin" evidence="1">
    <location>
        <begin position="283"/>
        <end position="343"/>
    </location>
</feature>
<feature type="domain" description="BPTI/Kunitz inhibitor 1" evidence="5">
    <location>
        <begin position="230"/>
        <end position="280"/>
    </location>
</feature>
<feature type="domain" description="BPTI/Kunitz inhibitor 2" evidence="5">
    <location>
        <begin position="286"/>
        <end position="336"/>
    </location>
</feature>
<feature type="binding site" description="covalent" evidence="2">
    <location>
        <position position="52"/>
    </location>
    <ligand>
        <name>3-hydroxy-L-kynurenine</name>
        <dbReference type="ChEBI" id="CHEBI:58125"/>
        <note>multimeric 3-hydroxykynurenine chromophore</note>
    </ligand>
</feature>
<feature type="binding site" description="covalent" evidence="2">
    <location>
        <position position="110"/>
    </location>
    <ligand>
        <name>3-hydroxy-L-kynurenine</name>
        <dbReference type="ChEBI" id="CHEBI:58125"/>
        <note>multimeric 3-hydroxykynurenine chromophore</note>
    </ligand>
</feature>
<feature type="binding site" description="covalent" evidence="2">
    <location>
        <position position="136"/>
    </location>
    <ligand>
        <name>3-hydroxy-L-kynurenine</name>
        <dbReference type="ChEBI" id="CHEBI:58125"/>
        <note>multimeric 3-hydroxykynurenine chromophore</note>
    </ligand>
</feature>
<feature type="binding site" description="covalent" evidence="2">
    <location>
        <position position="148"/>
    </location>
    <ligand>
        <name>3-hydroxy-L-kynurenine</name>
        <dbReference type="ChEBI" id="CHEBI:58125"/>
        <note>multimeric 3-hydroxykynurenine chromophore</note>
    </ligand>
</feature>
<feature type="site" description="Inhibitory (P1) (chymotrypsin, elastase)" evidence="1">
    <location>
        <begin position="240"/>
        <end position="241"/>
    </location>
</feature>
<feature type="site" description="Inhibitory (P1) (trypsin)" evidence="1">
    <location>
        <begin position="296"/>
        <end position="297"/>
    </location>
</feature>
<feature type="glycosylation site" description="N-linked (GlcNAc...) asparagine" evidence="4">
    <location>
        <position position="33"/>
    </location>
</feature>
<feature type="glycosylation site" description="N-linked (GlcNAc...) asparagine" evidence="4">
    <location>
        <position position="114"/>
    </location>
</feature>
<feature type="glycosylation site" description="O-linked (Xyl...) (chondroitin sulfate) serine" evidence="2">
    <location>
        <position position="214"/>
    </location>
</feature>
<feature type="glycosylation site" description="N-linked (GlcNAc...) asparagine" evidence="4">
    <location>
        <position position="233"/>
    </location>
</feature>
<feature type="disulfide bond" evidence="5">
    <location>
        <begin position="90"/>
        <end position="187"/>
    </location>
</feature>
<feature type="disulfide bond" evidence="5">
    <location>
        <begin position="230"/>
        <end position="280"/>
    </location>
</feature>
<feature type="disulfide bond" evidence="5">
    <location>
        <begin position="239"/>
        <end position="263"/>
    </location>
</feature>
<feature type="disulfide bond" evidence="5">
    <location>
        <begin position="255"/>
        <end position="276"/>
    </location>
</feature>
<feature type="disulfide bond" evidence="5">
    <location>
        <begin position="286"/>
        <end position="336"/>
    </location>
</feature>
<feature type="disulfide bond" evidence="5">
    <location>
        <begin position="295"/>
        <end position="319"/>
    </location>
</feature>
<feature type="disulfide bond" evidence="5">
    <location>
        <begin position="311"/>
        <end position="332"/>
    </location>
</feature>
<feature type="sequence conflict" description="In Ref. 1; CAA48640." evidence="10" ref="1">
    <original>S</original>
    <variation>Q</variation>
    <location>
        <position position="65"/>
    </location>
</feature>
<feature type="sequence conflict" description="In Ref. 4; BAB23659." evidence="10" ref="4">
    <original>G</original>
    <variation>E</variation>
    <location>
        <position position="185"/>
    </location>
</feature>
<reference key="1">
    <citation type="journal article" date="1993" name="Biochim. Biophys. Acta">
        <title>Mouse alpha-1-microglobulin/bikunin precursor: cDNA analysis, gene evolution and physical assignment of the gene next to the orosomucoid locus.</title>
        <authorList>
            <person name="Chan P."/>
            <person name="Salier J.-P."/>
        </authorList>
    </citation>
    <scope>NUCLEOTIDE SEQUENCE [MRNA]</scope>
    <source>
        <strain>BALB/cJ</strain>
        <tissue>Liver</tissue>
    </source>
</reference>
<reference key="2">
    <citation type="journal article" date="1994" name="J. Biochem.">
        <title>cDNA sequencing of mouse alpha 1-microglobulin/inter-alpha-trypsin inhibitor light chain and its expression in acute inflammation.</title>
        <authorList>
            <person name="Itoh H."/>
            <person name="Ide H."/>
            <person name="Kataoka H."/>
            <person name="Tomita M."/>
            <person name="Yoshihara H."/>
            <person name="Nawa Y."/>
        </authorList>
    </citation>
    <scope>NUCLEOTIDE SEQUENCE [MRNA]</scope>
    <source>
        <strain>C57BL/6J</strain>
        <tissue>Liver</tissue>
    </source>
</reference>
<reference key="3">
    <citation type="journal article" date="1999" name="Gene">
        <title>The alpha1-microglobulin/bikunin gene: characterization in mouse and evolution.</title>
        <authorList>
            <person name="Lindqvist A."/>
            <person name="Rouet P."/>
            <person name="Salier J.-P."/>
            <person name="Aakerstroem B."/>
        </authorList>
    </citation>
    <scope>NUCLEOTIDE SEQUENCE [GENOMIC DNA]</scope>
    <source>
        <strain>129/Sv</strain>
    </source>
</reference>
<reference key="4">
    <citation type="journal article" date="2005" name="Science">
        <title>The transcriptional landscape of the mammalian genome.</title>
        <authorList>
            <person name="Carninci P."/>
            <person name="Kasukawa T."/>
            <person name="Katayama S."/>
            <person name="Gough J."/>
            <person name="Frith M.C."/>
            <person name="Maeda N."/>
            <person name="Oyama R."/>
            <person name="Ravasi T."/>
            <person name="Lenhard B."/>
            <person name="Wells C."/>
            <person name="Kodzius R."/>
            <person name="Shimokawa K."/>
            <person name="Bajic V.B."/>
            <person name="Brenner S.E."/>
            <person name="Batalov S."/>
            <person name="Forrest A.R."/>
            <person name="Zavolan M."/>
            <person name="Davis M.J."/>
            <person name="Wilming L.G."/>
            <person name="Aidinis V."/>
            <person name="Allen J.E."/>
            <person name="Ambesi-Impiombato A."/>
            <person name="Apweiler R."/>
            <person name="Aturaliya R.N."/>
            <person name="Bailey T.L."/>
            <person name="Bansal M."/>
            <person name="Baxter L."/>
            <person name="Beisel K.W."/>
            <person name="Bersano T."/>
            <person name="Bono H."/>
            <person name="Chalk A.M."/>
            <person name="Chiu K.P."/>
            <person name="Choudhary V."/>
            <person name="Christoffels A."/>
            <person name="Clutterbuck D.R."/>
            <person name="Crowe M.L."/>
            <person name="Dalla E."/>
            <person name="Dalrymple B.P."/>
            <person name="de Bono B."/>
            <person name="Della Gatta G."/>
            <person name="di Bernardo D."/>
            <person name="Down T."/>
            <person name="Engstrom P."/>
            <person name="Fagiolini M."/>
            <person name="Faulkner G."/>
            <person name="Fletcher C.F."/>
            <person name="Fukushima T."/>
            <person name="Furuno M."/>
            <person name="Futaki S."/>
            <person name="Gariboldi M."/>
            <person name="Georgii-Hemming P."/>
            <person name="Gingeras T.R."/>
            <person name="Gojobori T."/>
            <person name="Green R.E."/>
            <person name="Gustincich S."/>
            <person name="Harbers M."/>
            <person name="Hayashi Y."/>
            <person name="Hensch T.K."/>
            <person name="Hirokawa N."/>
            <person name="Hill D."/>
            <person name="Huminiecki L."/>
            <person name="Iacono M."/>
            <person name="Ikeo K."/>
            <person name="Iwama A."/>
            <person name="Ishikawa T."/>
            <person name="Jakt M."/>
            <person name="Kanapin A."/>
            <person name="Katoh M."/>
            <person name="Kawasawa Y."/>
            <person name="Kelso J."/>
            <person name="Kitamura H."/>
            <person name="Kitano H."/>
            <person name="Kollias G."/>
            <person name="Krishnan S.P."/>
            <person name="Kruger A."/>
            <person name="Kummerfeld S.K."/>
            <person name="Kurochkin I.V."/>
            <person name="Lareau L.F."/>
            <person name="Lazarevic D."/>
            <person name="Lipovich L."/>
            <person name="Liu J."/>
            <person name="Liuni S."/>
            <person name="McWilliam S."/>
            <person name="Madan Babu M."/>
            <person name="Madera M."/>
            <person name="Marchionni L."/>
            <person name="Matsuda H."/>
            <person name="Matsuzawa S."/>
            <person name="Miki H."/>
            <person name="Mignone F."/>
            <person name="Miyake S."/>
            <person name="Morris K."/>
            <person name="Mottagui-Tabar S."/>
            <person name="Mulder N."/>
            <person name="Nakano N."/>
            <person name="Nakauchi H."/>
            <person name="Ng P."/>
            <person name="Nilsson R."/>
            <person name="Nishiguchi S."/>
            <person name="Nishikawa S."/>
            <person name="Nori F."/>
            <person name="Ohara O."/>
            <person name="Okazaki Y."/>
            <person name="Orlando V."/>
            <person name="Pang K.C."/>
            <person name="Pavan W.J."/>
            <person name="Pavesi G."/>
            <person name="Pesole G."/>
            <person name="Petrovsky N."/>
            <person name="Piazza S."/>
            <person name="Reed J."/>
            <person name="Reid J.F."/>
            <person name="Ring B.Z."/>
            <person name="Ringwald M."/>
            <person name="Rost B."/>
            <person name="Ruan Y."/>
            <person name="Salzberg S.L."/>
            <person name="Sandelin A."/>
            <person name="Schneider C."/>
            <person name="Schoenbach C."/>
            <person name="Sekiguchi K."/>
            <person name="Semple C.A."/>
            <person name="Seno S."/>
            <person name="Sessa L."/>
            <person name="Sheng Y."/>
            <person name="Shibata Y."/>
            <person name="Shimada H."/>
            <person name="Shimada K."/>
            <person name="Silva D."/>
            <person name="Sinclair B."/>
            <person name="Sperling S."/>
            <person name="Stupka E."/>
            <person name="Sugiura K."/>
            <person name="Sultana R."/>
            <person name="Takenaka Y."/>
            <person name="Taki K."/>
            <person name="Tammoja K."/>
            <person name="Tan S.L."/>
            <person name="Tang S."/>
            <person name="Taylor M.S."/>
            <person name="Tegner J."/>
            <person name="Teichmann S.A."/>
            <person name="Ueda H.R."/>
            <person name="van Nimwegen E."/>
            <person name="Verardo R."/>
            <person name="Wei C.L."/>
            <person name="Yagi K."/>
            <person name="Yamanishi H."/>
            <person name="Zabarovsky E."/>
            <person name="Zhu S."/>
            <person name="Zimmer A."/>
            <person name="Hide W."/>
            <person name="Bult C."/>
            <person name="Grimmond S.M."/>
            <person name="Teasdale R.D."/>
            <person name="Liu E.T."/>
            <person name="Brusic V."/>
            <person name="Quackenbush J."/>
            <person name="Wahlestedt C."/>
            <person name="Mattick J.S."/>
            <person name="Hume D.A."/>
            <person name="Kai C."/>
            <person name="Sasaki D."/>
            <person name="Tomaru Y."/>
            <person name="Fukuda S."/>
            <person name="Kanamori-Katayama M."/>
            <person name="Suzuki M."/>
            <person name="Aoki J."/>
            <person name="Arakawa T."/>
            <person name="Iida J."/>
            <person name="Imamura K."/>
            <person name="Itoh M."/>
            <person name="Kato T."/>
            <person name="Kawaji H."/>
            <person name="Kawagashira N."/>
            <person name="Kawashima T."/>
            <person name="Kojima M."/>
            <person name="Kondo S."/>
            <person name="Konno H."/>
            <person name="Nakano K."/>
            <person name="Ninomiya N."/>
            <person name="Nishio T."/>
            <person name="Okada M."/>
            <person name="Plessy C."/>
            <person name="Shibata K."/>
            <person name="Shiraki T."/>
            <person name="Suzuki S."/>
            <person name="Tagami M."/>
            <person name="Waki K."/>
            <person name="Watahiki A."/>
            <person name="Okamura-Oho Y."/>
            <person name="Suzuki H."/>
            <person name="Kawai J."/>
            <person name="Hayashizaki Y."/>
        </authorList>
    </citation>
    <scope>NUCLEOTIDE SEQUENCE [LARGE SCALE MRNA]</scope>
    <source>
        <strain>C57BL/6J</strain>
        <tissue>Liver</tissue>
    </source>
</reference>
<reference key="5">
    <citation type="journal article" date="2004" name="Genome Res.">
        <title>The status, quality, and expansion of the NIH full-length cDNA project: the Mammalian Gene Collection (MGC).</title>
        <authorList>
            <consortium name="The MGC Project Team"/>
        </authorList>
    </citation>
    <scope>NUCLEOTIDE SEQUENCE [LARGE SCALE MRNA]</scope>
    <source>
        <strain>FVB/N</strain>
        <tissue>Salivary gland</tissue>
    </source>
</reference>
<reference key="6">
    <citation type="journal article" date="2001" name="Biochem. Biophys. Res. Commun.">
        <title>Impaired fertility in female mice lacking urinary trypsin inhibitor.</title>
        <authorList>
            <person name="Sato H."/>
            <person name="Kajikawa S."/>
            <person name="Kuroda S."/>
            <person name="Horisawa Y."/>
            <person name="Nakamura N."/>
            <person name="Kaga N."/>
            <person name="Kakinuma C."/>
            <person name="Kato K."/>
            <person name="Morishita H."/>
            <person name="Niwa H."/>
            <person name="Miyazaki J."/>
        </authorList>
    </citation>
    <scope>FUNCTION</scope>
    <scope>DISRUPTION PHENOTYPE</scope>
</reference>
<reference key="7">
    <citation type="journal article" date="2001" name="J. Biol. Chem.">
        <title>Defect in SHAP-hyaluronan complex causes severe female infertility. A study by inactivation of the bikunin gene in mice.</title>
        <authorList>
            <person name="Zhuo L."/>
            <person name="Yoneda M."/>
            <person name="Zhao M."/>
            <person name="Yingsung W."/>
            <person name="Yoshida N."/>
            <person name="Kitagawa Y."/>
            <person name="Kawamura K."/>
            <person name="Suzuki T."/>
            <person name="Kimata K."/>
        </authorList>
    </citation>
    <scope>FUNCTION</scope>
    <scope>DISRUPTION PHENOTYPE</scope>
</reference>
<reference key="8">
    <citation type="journal article" date="2010" name="Cell">
        <title>A tissue-specific atlas of mouse protein phosphorylation and expression.</title>
        <authorList>
            <person name="Huttlin E.L."/>
            <person name="Jedrychowski M.P."/>
            <person name="Elias J.E."/>
            <person name="Goswami T."/>
            <person name="Rad R."/>
            <person name="Beausoleil S.A."/>
            <person name="Villen J."/>
            <person name="Haas W."/>
            <person name="Sowa M.E."/>
            <person name="Gygi S.P."/>
        </authorList>
    </citation>
    <scope>IDENTIFICATION BY MASS SPECTROMETRY [LARGE SCALE ANALYSIS]</scope>
    <source>
        <tissue>Brown adipose tissue</tissue>
        <tissue>Heart</tissue>
        <tissue>Kidney</tissue>
        <tissue>Liver</tissue>
        <tissue>Lung</tissue>
        <tissue>Pancreas</tissue>
        <tissue>Spleen</tissue>
        <tissue>Testis</tissue>
    </source>
</reference>
<reference key="9">
    <citation type="journal article" date="2021" name="Free Radic. Biol. Med.">
        <title>Human radical scavenger alpha1-microglobulin protects against hemolysis in vitro and alpha1-microglobulin knockout mice exhibit a macrocytic anemia phenotype.</title>
        <authorList>
            <person name="Kristiansson A."/>
            <person name="Bergwik J."/>
            <person name="Alattar A.G."/>
            <person name="Flygare J."/>
            <person name="Gram M."/>
            <person name="Hansson S.R."/>
            <person name="Olsson M.L."/>
            <person name="Storry J.R."/>
            <person name="Allhorn M."/>
            <person name="Aakerstroem B."/>
        </authorList>
    </citation>
    <scope>DISRUPTION PHENOTYPE</scope>
</reference>
<reference key="10">
    <citation type="journal article" date="2021" name="Free Radic. Biol. Med.">
        <title>Knockout of the radical scavenger alpha1-microglobulin in mice results in defective bikunin synthesis, endoplasmic reticulum stress and increased body weight.</title>
        <authorList>
            <person name="Bergwik J."/>
            <person name="Kristiansson A."/>
            <person name="Welinder C."/>
            <person name="Goeransson O."/>
            <person name="Hansson S.R."/>
            <person name="Gram M."/>
            <person name="Erlandsson L."/>
            <person name="Aakerstroem B."/>
        </authorList>
    </citation>
    <scope>FUNCTION</scope>
    <scope>DISRUPTION PHENOTYPE</scope>
    <scope>TISSUE SPECIFICITY</scope>
</reference>
<accession>Q07456</accession>
<accession>Q61294</accession>
<accession>Q925W1</accession>
<accession>Q9DBJ9</accession>
<proteinExistence type="evidence at protein level"/>
<keyword id="KW-1003">Cell membrane</keyword>
<keyword id="KW-0157">Chromophore</keyword>
<keyword id="KW-0165">Cleavage on pair of basic residues</keyword>
<keyword id="KW-0963">Cytoplasm</keyword>
<keyword id="KW-1015">Disulfide bond</keyword>
<keyword id="KW-0256">Endoplasmic reticulum</keyword>
<keyword id="KW-0272">Extracellular matrix</keyword>
<keyword id="KW-0325">Glycoprotein</keyword>
<keyword id="KW-0472">Membrane</keyword>
<keyword id="KW-0496">Mitochondrion</keyword>
<keyword id="KW-0999">Mitochondrion inner membrane</keyword>
<keyword id="KW-0539">Nucleus</keyword>
<keyword id="KW-0560">Oxidoreductase</keyword>
<keyword id="KW-0646">Protease inhibitor</keyword>
<keyword id="KW-0654">Proteoglycan</keyword>
<keyword id="KW-1185">Reference proteome</keyword>
<keyword id="KW-0677">Repeat</keyword>
<keyword id="KW-0964">Secreted</keyword>
<keyword id="KW-0722">Serine protease inhibitor</keyword>
<keyword id="KW-0732">Signal</keyword>